<feature type="chain" id="PRO_1000119302" description="Glycine cleavage system H protein">
    <location>
        <begin position="1"/>
        <end position="129"/>
    </location>
</feature>
<feature type="domain" description="Lipoyl-binding" evidence="2">
    <location>
        <begin position="24"/>
        <end position="106"/>
    </location>
</feature>
<feature type="modified residue" description="N6-lipoyllysine" evidence="1">
    <location>
        <position position="65"/>
    </location>
</feature>
<name>GCSH_ECOSM</name>
<comment type="function">
    <text evidence="1">The glycine cleavage system catalyzes the degradation of glycine. The H protein shuttles the methylamine group of glycine from the P protein to the T protein.</text>
</comment>
<comment type="cofactor">
    <cofactor evidence="1">
        <name>(R)-lipoate</name>
        <dbReference type="ChEBI" id="CHEBI:83088"/>
    </cofactor>
    <text evidence="1">Binds 1 lipoyl cofactor covalently.</text>
</comment>
<comment type="subunit">
    <text evidence="1">The glycine cleavage system is composed of four proteins: P, T, L and H.</text>
</comment>
<comment type="similarity">
    <text evidence="1">Belongs to the GcvH family.</text>
</comment>
<reference key="1">
    <citation type="journal article" date="2008" name="J. Bacteriol.">
        <title>Insights into the environmental resistance gene pool from the genome sequence of the multidrug-resistant environmental isolate Escherichia coli SMS-3-5.</title>
        <authorList>
            <person name="Fricke W.F."/>
            <person name="Wright M.S."/>
            <person name="Lindell A.H."/>
            <person name="Harkins D.M."/>
            <person name="Baker-Austin C."/>
            <person name="Ravel J."/>
            <person name="Stepanauskas R."/>
        </authorList>
    </citation>
    <scope>NUCLEOTIDE SEQUENCE [LARGE SCALE GENOMIC DNA]</scope>
    <source>
        <strain>SMS-3-5 / SECEC</strain>
    </source>
</reference>
<keyword id="KW-0450">Lipoyl</keyword>
<organism>
    <name type="scientific">Escherichia coli (strain SMS-3-5 / SECEC)</name>
    <dbReference type="NCBI Taxonomy" id="439855"/>
    <lineage>
        <taxon>Bacteria</taxon>
        <taxon>Pseudomonadati</taxon>
        <taxon>Pseudomonadota</taxon>
        <taxon>Gammaproteobacteria</taxon>
        <taxon>Enterobacterales</taxon>
        <taxon>Enterobacteriaceae</taxon>
        <taxon>Escherichia</taxon>
    </lineage>
</organism>
<protein>
    <recommendedName>
        <fullName evidence="1">Glycine cleavage system H protein</fullName>
    </recommendedName>
</protein>
<dbReference type="EMBL" id="CP000970">
    <property type="protein sequence ID" value="ACB16333.1"/>
    <property type="molecule type" value="Genomic_DNA"/>
</dbReference>
<dbReference type="RefSeq" id="WP_001295377.1">
    <property type="nucleotide sequence ID" value="NC_010498.1"/>
</dbReference>
<dbReference type="SMR" id="B1LDA4"/>
<dbReference type="GeneID" id="93779098"/>
<dbReference type="KEGG" id="ecm:EcSMS35_3036"/>
<dbReference type="HOGENOM" id="CLU_097408_2_1_6"/>
<dbReference type="Proteomes" id="UP000007011">
    <property type="component" value="Chromosome"/>
</dbReference>
<dbReference type="GO" id="GO:0005829">
    <property type="term" value="C:cytosol"/>
    <property type="evidence" value="ECO:0007669"/>
    <property type="project" value="TreeGrafter"/>
</dbReference>
<dbReference type="GO" id="GO:0005960">
    <property type="term" value="C:glycine cleavage complex"/>
    <property type="evidence" value="ECO:0007669"/>
    <property type="project" value="InterPro"/>
</dbReference>
<dbReference type="GO" id="GO:0019464">
    <property type="term" value="P:glycine decarboxylation via glycine cleavage system"/>
    <property type="evidence" value="ECO:0007669"/>
    <property type="project" value="UniProtKB-UniRule"/>
</dbReference>
<dbReference type="CDD" id="cd06848">
    <property type="entry name" value="GCS_H"/>
    <property type="match status" value="1"/>
</dbReference>
<dbReference type="FunFam" id="2.40.50.100:FF:000011">
    <property type="entry name" value="Glycine cleavage system H protein"/>
    <property type="match status" value="1"/>
</dbReference>
<dbReference type="Gene3D" id="2.40.50.100">
    <property type="match status" value="1"/>
</dbReference>
<dbReference type="HAMAP" id="MF_00272">
    <property type="entry name" value="GcvH"/>
    <property type="match status" value="1"/>
</dbReference>
<dbReference type="InterPro" id="IPR003016">
    <property type="entry name" value="2-oxoA_DH_lipoyl-BS"/>
</dbReference>
<dbReference type="InterPro" id="IPR000089">
    <property type="entry name" value="Biotin_lipoyl"/>
</dbReference>
<dbReference type="InterPro" id="IPR002930">
    <property type="entry name" value="GCV_H"/>
</dbReference>
<dbReference type="InterPro" id="IPR033753">
    <property type="entry name" value="GCV_H/Fam206"/>
</dbReference>
<dbReference type="InterPro" id="IPR017453">
    <property type="entry name" value="GCV_H_sub"/>
</dbReference>
<dbReference type="InterPro" id="IPR011053">
    <property type="entry name" value="Single_hybrid_motif"/>
</dbReference>
<dbReference type="NCBIfam" id="TIGR00527">
    <property type="entry name" value="gcvH"/>
    <property type="match status" value="1"/>
</dbReference>
<dbReference type="NCBIfam" id="NF002270">
    <property type="entry name" value="PRK01202.1"/>
    <property type="match status" value="1"/>
</dbReference>
<dbReference type="PANTHER" id="PTHR11715">
    <property type="entry name" value="GLYCINE CLEAVAGE SYSTEM H PROTEIN"/>
    <property type="match status" value="1"/>
</dbReference>
<dbReference type="PANTHER" id="PTHR11715:SF3">
    <property type="entry name" value="GLYCINE CLEAVAGE SYSTEM H PROTEIN-RELATED"/>
    <property type="match status" value="1"/>
</dbReference>
<dbReference type="Pfam" id="PF01597">
    <property type="entry name" value="GCV_H"/>
    <property type="match status" value="1"/>
</dbReference>
<dbReference type="SUPFAM" id="SSF51230">
    <property type="entry name" value="Single hybrid motif"/>
    <property type="match status" value="1"/>
</dbReference>
<dbReference type="PROSITE" id="PS50968">
    <property type="entry name" value="BIOTINYL_LIPOYL"/>
    <property type="match status" value="1"/>
</dbReference>
<dbReference type="PROSITE" id="PS00189">
    <property type="entry name" value="LIPOYL"/>
    <property type="match status" value="1"/>
</dbReference>
<accession>B1LDA4</accession>
<proteinExistence type="inferred from homology"/>
<evidence type="ECO:0000255" key="1">
    <source>
        <dbReference type="HAMAP-Rule" id="MF_00272"/>
    </source>
</evidence>
<evidence type="ECO:0000255" key="2">
    <source>
        <dbReference type="PROSITE-ProRule" id="PRU01066"/>
    </source>
</evidence>
<sequence length="129" mass="13811">MSNVPAELKYSKEHEWLRKEADGTYTVGITEHAQELLGDMVFVDLPEVGATVSAGDDCAVAESVKAASDIYAPVSGEIVAVNDALSDSPELVNSEPYAGGWIFKIKASDESELESLLDATAYEALLEDE</sequence>
<gene>
    <name evidence="1" type="primary">gcvH</name>
    <name type="ordered locus">EcSMS35_3036</name>
</gene>